<accession>B2VE93</accession>
<protein>
    <recommendedName>
        <fullName evidence="1">GTPase Der</fullName>
    </recommendedName>
    <alternativeName>
        <fullName evidence="1">GTP-binding protein EngA</fullName>
    </alternativeName>
</protein>
<dbReference type="EMBL" id="CU468135">
    <property type="protein sequence ID" value="CAO96078.1"/>
    <property type="molecule type" value="Genomic_DNA"/>
</dbReference>
<dbReference type="RefSeq" id="WP_012440778.1">
    <property type="nucleotide sequence ID" value="NC_010694.1"/>
</dbReference>
<dbReference type="SMR" id="B2VE93"/>
<dbReference type="STRING" id="465817.ETA_10320"/>
<dbReference type="KEGG" id="eta:ETA_10320"/>
<dbReference type="eggNOG" id="COG1160">
    <property type="taxonomic scope" value="Bacteria"/>
</dbReference>
<dbReference type="HOGENOM" id="CLU_016077_6_2_6"/>
<dbReference type="OrthoDB" id="9805918at2"/>
<dbReference type="Proteomes" id="UP000001726">
    <property type="component" value="Chromosome"/>
</dbReference>
<dbReference type="GO" id="GO:0005525">
    <property type="term" value="F:GTP binding"/>
    <property type="evidence" value="ECO:0007669"/>
    <property type="project" value="UniProtKB-UniRule"/>
</dbReference>
<dbReference type="GO" id="GO:0043022">
    <property type="term" value="F:ribosome binding"/>
    <property type="evidence" value="ECO:0007669"/>
    <property type="project" value="TreeGrafter"/>
</dbReference>
<dbReference type="GO" id="GO:0042254">
    <property type="term" value="P:ribosome biogenesis"/>
    <property type="evidence" value="ECO:0007669"/>
    <property type="project" value="UniProtKB-KW"/>
</dbReference>
<dbReference type="CDD" id="cd01894">
    <property type="entry name" value="EngA1"/>
    <property type="match status" value="1"/>
</dbReference>
<dbReference type="CDD" id="cd01895">
    <property type="entry name" value="EngA2"/>
    <property type="match status" value="1"/>
</dbReference>
<dbReference type="FunFam" id="3.30.300.20:FF:000004">
    <property type="entry name" value="GTPase Der"/>
    <property type="match status" value="1"/>
</dbReference>
<dbReference type="FunFam" id="3.40.50.300:FF:000040">
    <property type="entry name" value="GTPase Der"/>
    <property type="match status" value="1"/>
</dbReference>
<dbReference type="FunFam" id="3.40.50.300:FF:000057">
    <property type="entry name" value="GTPase Der"/>
    <property type="match status" value="1"/>
</dbReference>
<dbReference type="Gene3D" id="3.30.300.20">
    <property type="match status" value="1"/>
</dbReference>
<dbReference type="Gene3D" id="3.40.50.300">
    <property type="entry name" value="P-loop containing nucleotide triphosphate hydrolases"/>
    <property type="match status" value="2"/>
</dbReference>
<dbReference type="HAMAP" id="MF_00195">
    <property type="entry name" value="GTPase_Der"/>
    <property type="match status" value="1"/>
</dbReference>
<dbReference type="InterPro" id="IPR031166">
    <property type="entry name" value="G_ENGA"/>
</dbReference>
<dbReference type="InterPro" id="IPR006073">
    <property type="entry name" value="GTP-bd"/>
</dbReference>
<dbReference type="InterPro" id="IPR016484">
    <property type="entry name" value="GTPase_Der"/>
</dbReference>
<dbReference type="InterPro" id="IPR032859">
    <property type="entry name" value="KH_dom-like"/>
</dbReference>
<dbReference type="InterPro" id="IPR015946">
    <property type="entry name" value="KH_dom-like_a/b"/>
</dbReference>
<dbReference type="InterPro" id="IPR027417">
    <property type="entry name" value="P-loop_NTPase"/>
</dbReference>
<dbReference type="InterPro" id="IPR005225">
    <property type="entry name" value="Small_GTP-bd"/>
</dbReference>
<dbReference type="NCBIfam" id="TIGR03594">
    <property type="entry name" value="GTPase_EngA"/>
    <property type="match status" value="1"/>
</dbReference>
<dbReference type="NCBIfam" id="TIGR00231">
    <property type="entry name" value="small_GTP"/>
    <property type="match status" value="2"/>
</dbReference>
<dbReference type="PANTHER" id="PTHR43834">
    <property type="entry name" value="GTPASE DER"/>
    <property type="match status" value="1"/>
</dbReference>
<dbReference type="PANTHER" id="PTHR43834:SF6">
    <property type="entry name" value="GTPASE DER"/>
    <property type="match status" value="1"/>
</dbReference>
<dbReference type="Pfam" id="PF14714">
    <property type="entry name" value="KH_dom-like"/>
    <property type="match status" value="1"/>
</dbReference>
<dbReference type="Pfam" id="PF01926">
    <property type="entry name" value="MMR_HSR1"/>
    <property type="match status" value="2"/>
</dbReference>
<dbReference type="PIRSF" id="PIRSF006485">
    <property type="entry name" value="GTP-binding_EngA"/>
    <property type="match status" value="1"/>
</dbReference>
<dbReference type="PRINTS" id="PR00326">
    <property type="entry name" value="GTP1OBG"/>
</dbReference>
<dbReference type="SUPFAM" id="SSF52540">
    <property type="entry name" value="P-loop containing nucleoside triphosphate hydrolases"/>
    <property type="match status" value="2"/>
</dbReference>
<dbReference type="PROSITE" id="PS51712">
    <property type="entry name" value="G_ENGA"/>
    <property type="match status" value="2"/>
</dbReference>
<feature type="chain" id="PRO_1000099120" description="GTPase Der">
    <location>
        <begin position="1"/>
        <end position="499"/>
    </location>
</feature>
<feature type="domain" description="EngA-type G 1">
    <location>
        <begin position="3"/>
        <end position="166"/>
    </location>
</feature>
<feature type="domain" description="EngA-type G 2">
    <location>
        <begin position="211"/>
        <end position="384"/>
    </location>
</feature>
<feature type="domain" description="KH-like" evidence="1">
    <location>
        <begin position="385"/>
        <end position="469"/>
    </location>
</feature>
<feature type="binding site" evidence="1">
    <location>
        <begin position="9"/>
        <end position="16"/>
    </location>
    <ligand>
        <name>GTP</name>
        <dbReference type="ChEBI" id="CHEBI:37565"/>
        <label>1</label>
    </ligand>
</feature>
<feature type="binding site" evidence="1">
    <location>
        <begin position="56"/>
        <end position="60"/>
    </location>
    <ligand>
        <name>GTP</name>
        <dbReference type="ChEBI" id="CHEBI:37565"/>
        <label>1</label>
    </ligand>
</feature>
<feature type="binding site" evidence="1">
    <location>
        <begin position="118"/>
        <end position="121"/>
    </location>
    <ligand>
        <name>GTP</name>
        <dbReference type="ChEBI" id="CHEBI:37565"/>
        <label>1</label>
    </ligand>
</feature>
<feature type="binding site" evidence="1">
    <location>
        <begin position="217"/>
        <end position="224"/>
    </location>
    <ligand>
        <name>GTP</name>
        <dbReference type="ChEBI" id="CHEBI:37565"/>
        <label>2</label>
    </ligand>
</feature>
<feature type="binding site" evidence="1">
    <location>
        <begin position="264"/>
        <end position="268"/>
    </location>
    <ligand>
        <name>GTP</name>
        <dbReference type="ChEBI" id="CHEBI:37565"/>
        <label>2</label>
    </ligand>
</feature>
<feature type="binding site" evidence="1">
    <location>
        <begin position="329"/>
        <end position="332"/>
    </location>
    <ligand>
        <name>GTP</name>
        <dbReference type="ChEBI" id="CHEBI:37565"/>
        <label>2</label>
    </ligand>
</feature>
<evidence type="ECO:0000255" key="1">
    <source>
        <dbReference type="HAMAP-Rule" id="MF_00195"/>
    </source>
</evidence>
<proteinExistence type="inferred from homology"/>
<name>DER_ERWT9</name>
<gene>
    <name evidence="1" type="primary">der</name>
    <name type="synonym">engA</name>
    <name type="ordered locus">ETA_10320</name>
</gene>
<keyword id="KW-0342">GTP-binding</keyword>
<keyword id="KW-0547">Nucleotide-binding</keyword>
<keyword id="KW-1185">Reference proteome</keyword>
<keyword id="KW-0677">Repeat</keyword>
<keyword id="KW-0690">Ribosome biogenesis</keyword>
<reference key="1">
    <citation type="journal article" date="2008" name="Environ. Microbiol.">
        <title>The genome of Erwinia tasmaniensis strain Et1/99, a non-pathogenic bacterium in the genus Erwinia.</title>
        <authorList>
            <person name="Kube M."/>
            <person name="Migdoll A.M."/>
            <person name="Mueller I."/>
            <person name="Kuhl H."/>
            <person name="Beck A."/>
            <person name="Reinhardt R."/>
            <person name="Geider K."/>
        </authorList>
    </citation>
    <scope>NUCLEOTIDE SEQUENCE [LARGE SCALE GENOMIC DNA]</scope>
    <source>
        <strain>DSM 17950 / CFBP 7177 / CIP 109463 / NCPPB 4357 / Et1/99</strain>
    </source>
</reference>
<comment type="function">
    <text evidence="1">GTPase that plays an essential role in the late steps of ribosome biogenesis.</text>
</comment>
<comment type="subunit">
    <text evidence="1">Associates with the 50S ribosomal subunit.</text>
</comment>
<comment type="similarity">
    <text evidence="1">Belongs to the TRAFAC class TrmE-Era-EngA-EngB-Septin-like GTPase superfamily. EngA (Der) GTPase family.</text>
</comment>
<organism>
    <name type="scientific">Erwinia tasmaniensis (strain DSM 17950 / CFBP 7177 / CIP 109463 / NCPPB 4357 / Et1/99)</name>
    <dbReference type="NCBI Taxonomy" id="465817"/>
    <lineage>
        <taxon>Bacteria</taxon>
        <taxon>Pseudomonadati</taxon>
        <taxon>Pseudomonadota</taxon>
        <taxon>Gammaproteobacteria</taxon>
        <taxon>Enterobacterales</taxon>
        <taxon>Erwiniaceae</taxon>
        <taxon>Erwinia</taxon>
    </lineage>
</organism>
<sequence>MVPVVALVGRPNVGKSTLFNRLTRTRDALVADFPGLTRDRKYGRAEIEGREFICIDTGGIDGNEEGVETRMAEQSLLAIEEADVVLFMVDARAGLMPADTAIAKHLRSRQKPTFLVANKTDGLDADSAVVDFWSLGLGEIHPIAASHGRGVTSLLELVLLPWMDEVVPQRELTEEEENAAYWAELAAKEAKVNGEATADEEDDFNPLDLPIKLAIVGRPNVGKSTLTNRILGEDRVVVFDMPGTTRDSIYIPMERDGREYILIDTAGVRKRGKVTETVEKFSVIKTLQAIEDANVVMLVIDAHEGISDQDLSLLGFILNSGRSLVIVVNKWDGLSQEVRDEVKEALDYRLGFIDFARIHFISALHGSGVGNLFESVTEAYDCSTRRVNTSMLTRIMHMAADDHQPPLVRSRRVKLKYAHAGGYNPPIVVIHGNQVKDLPDSYKRYLMNYFRRSLDIMGTPIRIQFKEGDNPYEGKRNLLTPNQQRKRQRLMSHLKKNKR</sequence>